<keyword id="KW-0025">Alternative splicing</keyword>
<keyword id="KW-0067">ATP-binding</keyword>
<keyword id="KW-0436">Ligase</keyword>
<keyword id="KW-0460">Magnesium</keyword>
<keyword id="KW-0479">Metal-binding</keyword>
<keyword id="KW-0547">Nucleotide-binding</keyword>
<keyword id="KW-1185">Reference proteome</keyword>
<dbReference type="EC" id="6.3.2.-" evidence="8"/>
<dbReference type="EMBL" id="BX284603">
    <property type="protein sequence ID" value="CAA87425.3"/>
    <property type="molecule type" value="Genomic_DNA"/>
</dbReference>
<dbReference type="EMBL" id="BX284603">
    <property type="protein sequence ID" value="CAI46580.1"/>
    <property type="molecule type" value="Genomic_DNA"/>
</dbReference>
<dbReference type="PIR" id="E88575">
    <property type="entry name" value="E88575"/>
</dbReference>
<dbReference type="PIR" id="T27699">
    <property type="entry name" value="T27699"/>
</dbReference>
<dbReference type="RefSeq" id="NP_001022985.1">
    <molecule id="Q09647-1"/>
    <property type="nucleotide sequence ID" value="NM_001027814.4"/>
</dbReference>
<dbReference type="RefSeq" id="NP_001022986.1">
    <molecule id="Q09647-2"/>
    <property type="nucleotide sequence ID" value="NM_001027815.6"/>
</dbReference>
<dbReference type="SMR" id="Q09647"/>
<dbReference type="BioGRID" id="41621">
    <property type="interactions" value="3"/>
</dbReference>
<dbReference type="FunCoup" id="Q09647">
    <property type="interactions" value="1222"/>
</dbReference>
<dbReference type="STRING" id="6239.ZK1128.6a.1"/>
<dbReference type="PaxDb" id="6239-ZK1128.6a"/>
<dbReference type="PeptideAtlas" id="Q09647"/>
<dbReference type="EnsemblMetazoa" id="ZK1128.6a.1">
    <molecule id="Q09647-1"/>
    <property type="protein sequence ID" value="ZK1128.6a.1"/>
    <property type="gene ID" value="WBGene00014232"/>
</dbReference>
<dbReference type="EnsemblMetazoa" id="ZK1128.6b.1">
    <molecule id="Q09647-2"/>
    <property type="protein sequence ID" value="ZK1128.6b.1"/>
    <property type="gene ID" value="WBGene00014232"/>
</dbReference>
<dbReference type="EnsemblMetazoa" id="ZK1128.6b.2">
    <molecule id="Q09647-2"/>
    <property type="protein sequence ID" value="ZK1128.6b.2"/>
    <property type="gene ID" value="WBGene00014232"/>
</dbReference>
<dbReference type="EnsemblMetazoa" id="ZK1128.6b.3">
    <molecule id="Q09647-2"/>
    <property type="protein sequence ID" value="ZK1128.6b.3"/>
    <property type="gene ID" value="WBGene00014232"/>
</dbReference>
<dbReference type="GeneID" id="176427"/>
<dbReference type="KEGG" id="cel:CELE_ZK1128.6"/>
<dbReference type="UCSC" id="ZK1128.6a">
    <property type="organism name" value="c. elegans"/>
</dbReference>
<dbReference type="AGR" id="WB:WBGene00014232"/>
<dbReference type="CTD" id="176427"/>
<dbReference type="WormBase" id="ZK1128.6a">
    <molecule id="Q09647-1"/>
    <property type="protein sequence ID" value="CE29940"/>
    <property type="gene ID" value="WBGene00014232"/>
    <property type="gene designation" value="ttll-4"/>
</dbReference>
<dbReference type="WormBase" id="ZK1128.6b">
    <molecule id="Q09647-2"/>
    <property type="protein sequence ID" value="CE38015"/>
    <property type="gene ID" value="WBGene00014232"/>
    <property type="gene designation" value="ttll-4"/>
</dbReference>
<dbReference type="eggNOG" id="KOG2156">
    <property type="taxonomic scope" value="Eukaryota"/>
</dbReference>
<dbReference type="GeneTree" id="ENSGT00940000157916"/>
<dbReference type="InParanoid" id="Q09647"/>
<dbReference type="OMA" id="FWIGYWG"/>
<dbReference type="OrthoDB" id="202825at2759"/>
<dbReference type="PhylomeDB" id="Q09647"/>
<dbReference type="PRO" id="PR:Q09647"/>
<dbReference type="Proteomes" id="UP000001940">
    <property type="component" value="Chromosome III"/>
</dbReference>
<dbReference type="Bgee" id="WBGene00014232">
    <property type="expression patterns" value="Expressed in germ line (C elegans) and 4 other cell types or tissues"/>
</dbReference>
<dbReference type="GO" id="GO:0036064">
    <property type="term" value="C:ciliary basal body"/>
    <property type="evidence" value="ECO:0000318"/>
    <property type="project" value="GO_Central"/>
</dbReference>
<dbReference type="GO" id="GO:0005524">
    <property type="term" value="F:ATP binding"/>
    <property type="evidence" value="ECO:0007669"/>
    <property type="project" value="UniProtKB-KW"/>
</dbReference>
<dbReference type="GO" id="GO:0046872">
    <property type="term" value="F:metal ion binding"/>
    <property type="evidence" value="ECO:0007669"/>
    <property type="project" value="UniProtKB-KW"/>
</dbReference>
<dbReference type="GO" id="GO:0070739">
    <property type="term" value="F:protein-glutamic acid ligase activity"/>
    <property type="evidence" value="ECO:0000314"/>
    <property type="project" value="UniProtKB"/>
</dbReference>
<dbReference type="GO" id="GO:0106437">
    <property type="term" value="F:protein-glutamic acid ligase activity, initiating"/>
    <property type="evidence" value="ECO:0007669"/>
    <property type="project" value="RHEA"/>
</dbReference>
<dbReference type="GO" id="GO:0015631">
    <property type="term" value="F:tubulin binding"/>
    <property type="evidence" value="ECO:0000318"/>
    <property type="project" value="GO_Central"/>
</dbReference>
<dbReference type="GO" id="GO:0070740">
    <property type="term" value="F:tubulin-glutamic acid ligase activity"/>
    <property type="evidence" value="ECO:0000314"/>
    <property type="project" value="UniProtKB"/>
</dbReference>
<dbReference type="GO" id="GO:0000226">
    <property type="term" value="P:microtubule cytoskeleton organization"/>
    <property type="evidence" value="ECO:0000318"/>
    <property type="project" value="GO_Central"/>
</dbReference>
<dbReference type="GO" id="GO:0018095">
    <property type="term" value="P:protein polyglutamylation"/>
    <property type="evidence" value="ECO:0000315"/>
    <property type="project" value="UniProtKB"/>
</dbReference>
<dbReference type="GO" id="GO:0034606">
    <property type="term" value="P:response to hermaphrodite contact"/>
    <property type="evidence" value="ECO:0000316"/>
    <property type="project" value="UniProtKB"/>
</dbReference>
<dbReference type="Gene3D" id="3.30.470.20">
    <property type="entry name" value="ATP-grasp fold, B domain"/>
    <property type="match status" value="1"/>
</dbReference>
<dbReference type="InterPro" id="IPR004344">
    <property type="entry name" value="TTL/TTLL_fam"/>
</dbReference>
<dbReference type="PANTHER" id="PTHR12241:SF162">
    <property type="entry name" value="TUBULIN MONOGLUTAMYLASE TTLL4"/>
    <property type="match status" value="1"/>
</dbReference>
<dbReference type="PANTHER" id="PTHR12241">
    <property type="entry name" value="TUBULIN POLYGLUTAMYLASE"/>
    <property type="match status" value="1"/>
</dbReference>
<dbReference type="Pfam" id="PF03133">
    <property type="entry name" value="TTL"/>
    <property type="match status" value="1"/>
</dbReference>
<dbReference type="SUPFAM" id="SSF56059">
    <property type="entry name" value="Glutathione synthetase ATP-binding domain-like"/>
    <property type="match status" value="1"/>
</dbReference>
<dbReference type="PROSITE" id="PS51221">
    <property type="entry name" value="TTL"/>
    <property type="match status" value="1"/>
</dbReference>
<proteinExistence type="evidence at protein level"/>
<gene>
    <name evidence="12" type="primary">ttll-4</name>
    <name evidence="12" type="ORF">ZK1128.6</name>
</gene>
<reference key="1">
    <citation type="journal article" date="1998" name="Science">
        <title>Genome sequence of the nematode C. elegans: a platform for investigating biology.</title>
        <authorList>
            <consortium name="The C. elegans sequencing consortium"/>
        </authorList>
    </citation>
    <scope>NUCLEOTIDE SEQUENCE [LARGE SCALE GENOMIC DNA]</scope>
    <source>
        <strain>Bristol N2</strain>
    </source>
</reference>
<reference key="2">
    <citation type="journal article" date="2010" name="J. Biol. Chem.">
        <title>Identification of tubulin deglutamylase among Caenorhabditis elegans and mammalian cytosolic carboxypeptidases (CCPs).</title>
        <authorList>
            <person name="Kimura Y."/>
            <person name="Kurabe N."/>
            <person name="Ikegami K."/>
            <person name="Tsutsumi K."/>
            <person name="Konishi Y."/>
            <person name="Kaplan O.I."/>
            <person name="Kunitomo H."/>
            <person name="Iino Y."/>
            <person name="Blacque O.E."/>
            <person name="Setou M."/>
        </authorList>
    </citation>
    <scope>FUNCTION</scope>
    <scope>TISSUE SPECIFICITY</scope>
</reference>
<reference key="3">
    <citation type="journal article" date="2014" name="Dev. Cell">
        <title>In situ imaging in C. elegans reveals developmental regulation of microtubule dynamics.</title>
        <authorList>
            <person name="Lacroix B."/>
            <person name="Bourdages K.G."/>
            <person name="Dorn J.F."/>
            <person name="Ihara S."/>
            <person name="Sherwood D.R."/>
            <person name="Maddox P.S."/>
            <person name="Maddox A.S."/>
        </authorList>
    </citation>
    <scope>DISRUPTION PHENOTYPE</scope>
</reference>
<reference key="4">
    <citation type="journal article" date="2016" name="Biol. Open">
        <title>Caenorhabditis elegans glutamylating enzymes function redundantly in male mating.</title>
        <authorList>
            <person name="Chawla D.G."/>
            <person name="Shah R.V."/>
            <person name="Barth Z.K."/>
            <person name="Lee J.D."/>
            <person name="Badecker K.E."/>
            <person name="Naik A."/>
            <person name="Brewster M.M."/>
            <person name="Salmon T.P."/>
            <person name="Peel N."/>
        </authorList>
    </citation>
    <scope>FUNCTION</scope>
    <scope>DEVELOPMENTAL STAGE</scope>
</reference>
<reference key="5">
    <citation type="journal article" date="2018" name="Sci. Rep.">
        <title>Environmental responsiveness of tubulin glutamylation in sensory cilia is regulated by the p38 MAPK pathway.</title>
        <authorList>
            <person name="Kimura Y."/>
            <person name="Tsutsumi K."/>
            <person name="Konno A."/>
            <person name="Ikegami K."/>
            <person name="Hameed S."/>
            <person name="Kaneko T."/>
            <person name="Kaplan O.I."/>
            <person name="Teramoto T."/>
            <person name="Fujiwara M."/>
            <person name="Ishihara T."/>
            <person name="Blacque O.E."/>
            <person name="Setou M."/>
        </authorList>
    </citation>
    <scope>FUNCTION</scope>
    <scope>MUTAGENESIS OF THR-446</scope>
</reference>
<reference key="6">
    <citation type="journal article" date="2020" name="Nat. Struct. Mol. Biol.">
        <title>Structural basis for polyglutamate chain initiation and elongation by TTLL family enzymes.</title>
        <authorList>
            <person name="Mahalingan K.K."/>
            <person name="Keith Keenan E."/>
            <person name="Strickland M."/>
            <person name="Li Y."/>
            <person name="Liu Y."/>
            <person name="Ball H.L."/>
            <person name="Tanner M.E."/>
            <person name="Tjandra N."/>
            <person name="Roll-Mecak A."/>
        </authorList>
    </citation>
    <scope>FUNCTION</scope>
    <scope>CATALYTIC ACTIVITY</scope>
    <scope>BIOPHYSICOCHEMICAL PROPERTIES</scope>
</reference>
<protein>
    <recommendedName>
        <fullName>Tubulin polyglutamylase ttll-4</fullName>
        <ecNumber evidence="8">6.3.2.-</ecNumber>
    </recommendedName>
    <alternativeName>
        <fullName evidence="9">Tubulin--tyrosine ligase-like protein 4</fullName>
    </alternativeName>
</protein>
<name>TTLL4_CAEEL</name>
<comment type="function">
    <text evidence="4 6 7 8">Monoglutamylase which modifies tubulin, adding a single glutamate on the gamma-carboxyl group of specific glutamate residues of target proteins (PubMed:32747782). Involved in the side-chain initiation step of the polyglutamylation reaction but not in the elongation step. Preferentially modifies beta-tail tubulin over the alpha-tubulin (PubMed:32747782). Involved in side-chain glutamylation of tubulin in sensory cilia (PubMed:20519502, PubMed:27635036, PubMed:29849065). Together with ttll-5 and ttll-11, required for male mating (PubMed:27635036).</text>
</comment>
<comment type="catalytic activity">
    <reaction evidence="8">
        <text>L-glutamyl-[protein] + L-glutamate + ATP = gamma-L-glutamyl-L-glutamyl-[protein] + ADP + phosphate + H(+)</text>
        <dbReference type="Rhea" id="RHEA:60144"/>
        <dbReference type="Rhea" id="RHEA-COMP:10208"/>
        <dbReference type="Rhea" id="RHEA-COMP:15517"/>
        <dbReference type="ChEBI" id="CHEBI:15378"/>
        <dbReference type="ChEBI" id="CHEBI:29973"/>
        <dbReference type="ChEBI" id="CHEBI:29985"/>
        <dbReference type="ChEBI" id="CHEBI:30616"/>
        <dbReference type="ChEBI" id="CHEBI:43474"/>
        <dbReference type="ChEBI" id="CHEBI:143622"/>
        <dbReference type="ChEBI" id="CHEBI:456216"/>
    </reaction>
    <physiologicalReaction direction="left-to-right" evidence="11">
        <dbReference type="Rhea" id="RHEA:60145"/>
    </physiologicalReaction>
</comment>
<comment type="cofactor">
    <cofactor evidence="1">
        <name>Mg(2+)</name>
        <dbReference type="ChEBI" id="CHEBI:18420"/>
    </cofactor>
</comment>
<comment type="biophysicochemical properties">
    <kinetics>
        <KM evidence="8">6.66 uM for non-glutamylated tubulin</KM>
        <KM evidence="8">5.35 uM for glutamylated tubulin</KM>
        <text evidence="8">kcat is 0.102 min(-1) non-glutamylated tubulin as substrate (PubMed:32747782). kcat is 0.027 min(-1) glutamylated tubulin as substrate (PubMed:32747782).</text>
    </kinetics>
</comment>
<comment type="alternative products">
    <event type="alternative splicing"/>
    <isoform>
        <id>Q09647-1</id>
        <name evidence="12">a</name>
        <sequence type="displayed"/>
    </isoform>
    <isoform>
        <id>Q09647-2</id>
        <name evidence="13">b</name>
        <sequence type="described" ref="VSP_040444"/>
    </isoform>
</comment>
<comment type="tissue specificity">
    <text evidence="4">Expressed in many sensory neurons in amphid.</text>
</comment>
<comment type="developmental stage">
    <text evidence="6">Expressed in embryos and adults.</text>
</comment>
<comment type="disruption phenotype">
    <text evidence="5">RNAi-mediated knockdown at the L1 or L4 larval stages causes a defect in egg-laying.</text>
</comment>
<comment type="similarity">
    <text evidence="10">Belongs to the tubulin--tyrosine ligase family.</text>
</comment>
<organism>
    <name type="scientific">Caenorhabditis elegans</name>
    <dbReference type="NCBI Taxonomy" id="6239"/>
    <lineage>
        <taxon>Eukaryota</taxon>
        <taxon>Metazoa</taxon>
        <taxon>Ecdysozoa</taxon>
        <taxon>Nematoda</taxon>
        <taxon>Chromadorea</taxon>
        <taxon>Rhabditida</taxon>
        <taxon>Rhabditina</taxon>
        <taxon>Rhabditomorpha</taxon>
        <taxon>Rhabditoidea</taxon>
        <taxon>Rhabditidae</taxon>
        <taxon>Peloderinae</taxon>
        <taxon>Caenorhabditis</taxon>
    </lineage>
</organism>
<feature type="chain" id="PRO_0000403767" description="Tubulin polyglutamylase ttll-4">
    <location>
        <begin position="1"/>
        <end position="601"/>
    </location>
</feature>
<feature type="domain" description="TTL" evidence="2">
    <location>
        <begin position="138"/>
        <end position="476"/>
    </location>
</feature>
<feature type="region of interest" description="Disordered" evidence="3">
    <location>
        <begin position="1"/>
        <end position="37"/>
    </location>
</feature>
<feature type="compositionally biased region" description="Polar residues" evidence="3">
    <location>
        <begin position="1"/>
        <end position="18"/>
    </location>
</feature>
<feature type="binding site" evidence="1">
    <location>
        <position position="254"/>
    </location>
    <ligand>
        <name>ATP</name>
        <dbReference type="ChEBI" id="CHEBI:30616"/>
    </ligand>
</feature>
<feature type="binding site" evidence="1">
    <location>
        <begin position="260"/>
        <end position="261"/>
    </location>
    <ligand>
        <name>ATP</name>
        <dbReference type="ChEBI" id="CHEBI:30616"/>
    </ligand>
</feature>
<feature type="binding site" evidence="1">
    <location>
        <position position="260"/>
    </location>
    <ligand>
        <name>a protein</name>
        <dbReference type="ChEBI" id="CHEBI:16541"/>
    </ligand>
    <ligandPart>
        <name>L-glutamate residue</name>
        <dbReference type="ChEBI" id="CHEBI:29973"/>
        <note>L-glutamate acceptor residue in protein target</note>
    </ligandPart>
</feature>
<feature type="binding site" evidence="1">
    <location>
        <begin position="282"/>
        <end position="285"/>
    </location>
    <ligand>
        <name>ATP</name>
        <dbReference type="ChEBI" id="CHEBI:30616"/>
    </ligand>
</feature>
<feature type="binding site" evidence="1">
    <location>
        <begin position="295"/>
        <end position="297"/>
    </location>
    <ligand>
        <name>ATP</name>
        <dbReference type="ChEBI" id="CHEBI:30616"/>
    </ligand>
</feature>
<feature type="binding site" evidence="1">
    <location>
        <position position="321"/>
    </location>
    <ligand>
        <name>L-glutamate</name>
        <dbReference type="ChEBI" id="CHEBI:29985"/>
    </ligand>
</feature>
<feature type="binding site" evidence="1">
    <location>
        <begin position="342"/>
        <end position="343"/>
    </location>
    <ligand>
        <name>ATP</name>
        <dbReference type="ChEBI" id="CHEBI:30616"/>
    </ligand>
</feature>
<feature type="binding site" evidence="1">
    <location>
        <position position="344"/>
    </location>
    <ligand>
        <name>L-glutamate</name>
        <dbReference type="ChEBI" id="CHEBI:29985"/>
    </ligand>
</feature>
<feature type="binding site" evidence="1">
    <location>
        <position position="345"/>
    </location>
    <ligand>
        <name>L-glutamate</name>
        <dbReference type="ChEBI" id="CHEBI:29985"/>
    </ligand>
</feature>
<feature type="binding site" evidence="1">
    <location>
        <position position="362"/>
    </location>
    <ligand>
        <name>L-glutamate</name>
        <dbReference type="ChEBI" id="CHEBI:29985"/>
    </ligand>
</feature>
<feature type="binding site" evidence="1">
    <location>
        <position position="422"/>
    </location>
    <ligand>
        <name>Mg(2+)</name>
        <dbReference type="ChEBI" id="CHEBI:18420"/>
        <label>1</label>
    </ligand>
</feature>
<feature type="binding site" evidence="1">
    <location>
        <position position="435"/>
    </location>
    <ligand>
        <name>Mg(2+)</name>
        <dbReference type="ChEBI" id="CHEBI:18420"/>
        <label>1</label>
    </ligand>
</feature>
<feature type="binding site" evidence="1">
    <location>
        <position position="435"/>
    </location>
    <ligand>
        <name>Mg(2+)</name>
        <dbReference type="ChEBI" id="CHEBI:18420"/>
        <label>2</label>
    </ligand>
</feature>
<feature type="binding site" evidence="1">
    <location>
        <position position="437"/>
    </location>
    <ligand>
        <name>Mg(2+)</name>
        <dbReference type="ChEBI" id="CHEBI:18420"/>
        <label>2</label>
    </ligand>
</feature>
<feature type="binding site" evidence="1">
    <location>
        <position position="453"/>
    </location>
    <ligand>
        <name>L-glutamate</name>
        <dbReference type="ChEBI" id="CHEBI:29985"/>
    </ligand>
</feature>
<feature type="site" description="Essential for specifying initiation versus elongation step of the polyglutamylase activity" evidence="1">
    <location>
        <position position="260"/>
    </location>
</feature>
<feature type="splice variant" id="VSP_040444" description="In isoform b." evidence="10">
    <location>
        <begin position="1"/>
        <end position="38"/>
    </location>
</feature>
<feature type="mutagenesis site" description="Impairs increase in tubulin glutamylation levels in sensory cilia in response to starvation. Has no effect on basal tubulin glutamylation levels in sensory cilia." evidence="7">
    <original>T</original>
    <variation>A</variation>
    <location>
        <position position="446"/>
    </location>
</feature>
<feature type="mutagenesis site" description="Increases basal tubulin glutamylation levels in sensory cilia." evidence="7">
    <original>T</original>
    <variation>E</variation>
    <location>
        <position position="446"/>
    </location>
</feature>
<accession>Q09647</accession>
<accession>Q5FC81</accession>
<evidence type="ECO:0000250" key="1">
    <source>
        <dbReference type="UniProtKB" id="A4Q9E8"/>
    </source>
</evidence>
<evidence type="ECO:0000255" key="2">
    <source>
        <dbReference type="PROSITE-ProRule" id="PRU00568"/>
    </source>
</evidence>
<evidence type="ECO:0000256" key="3">
    <source>
        <dbReference type="SAM" id="MobiDB-lite"/>
    </source>
</evidence>
<evidence type="ECO:0000269" key="4">
    <source>
    </source>
</evidence>
<evidence type="ECO:0000269" key="5">
    <source>
    </source>
</evidence>
<evidence type="ECO:0000269" key="6">
    <source>
    </source>
</evidence>
<evidence type="ECO:0000269" key="7">
    <source>
    </source>
</evidence>
<evidence type="ECO:0000269" key="8">
    <source>
    </source>
</evidence>
<evidence type="ECO:0000303" key="9">
    <source>
    </source>
</evidence>
<evidence type="ECO:0000305" key="10"/>
<evidence type="ECO:0000305" key="11">
    <source>
    </source>
</evidence>
<evidence type="ECO:0000312" key="12">
    <source>
        <dbReference type="WormBase" id="ZK1128.6a"/>
    </source>
</evidence>
<evidence type="ECO:0000312" key="13">
    <source>
        <dbReference type="WormBase" id="ZK1128.6b"/>
    </source>
</evidence>
<sequence>MSSGYSSAPSVSHTSSDTDLNRIDSYDDGAEETTDEQRMCGLSELVTSCLTSSRLKAIDEEDEEENCNDIEIVGLSKTTTKVKRSKKVLSCPIVSSSTKKENGNAAPFLKSSQFTDVPPTIRFYTKGTKVTKPARKIQARLTWCHNSLLPIVMRQTLAASHFTVVDESLFYVGYWGRHLKSAQYRALQPHQKVNHFPGAFHIGRKDRLWMHIRKQQERFEGEFDIMPFTYILPTDRQELLKYLETDASRHVIVKPPASARGTGISVTRKPKDFPTTATLVAQHYIERPLTINRAKFDLRLYAYVPTFEPLRVYIYDQGLVRFASVPYSHSVSTISNKYMHLTNYSINKLAEADGVANKPVPKWTLHHLWEHFDEMGVDREKIQREIEEVIIKAFISTEKPIREHMSRFLEQEFICYELFGIDIILDEDYKPWLLEVNISPSLHSGTPLDVSVKAPLAKDVLNLAGVYVPPSFDKLSDADYSTRPRNGRKNREQLIKEASWVAAYKDQLGVIDNRIFKRLTPEDTRALVEFEDELERIGDFKLVFPTAHTSHYQKYFAETIYMNILLQQWQIAQEDDRSIGINRLEQLCRQKHMQSDQETSF</sequence>